<evidence type="ECO:0000255" key="1">
    <source>
        <dbReference type="HAMAP-Rule" id="MF_01622"/>
    </source>
</evidence>
<dbReference type="EC" id="2.9.1.3" evidence="1"/>
<dbReference type="EMBL" id="AP009240">
    <property type="protein sequence ID" value="BAG76053.1"/>
    <property type="molecule type" value="Genomic_DNA"/>
</dbReference>
<dbReference type="SMR" id="B6I0F4"/>
<dbReference type="KEGG" id="ecy:ECSE_0529"/>
<dbReference type="HOGENOM" id="CLU_043456_1_0_6"/>
<dbReference type="Proteomes" id="UP000008199">
    <property type="component" value="Chromosome"/>
</dbReference>
<dbReference type="GO" id="GO:0016765">
    <property type="term" value="F:transferase activity, transferring alkyl or aryl (other than methyl) groups"/>
    <property type="evidence" value="ECO:0007669"/>
    <property type="project" value="UniProtKB-UniRule"/>
</dbReference>
<dbReference type="GO" id="GO:0043828">
    <property type="term" value="F:tRNA 2-selenouridine synthase activity"/>
    <property type="evidence" value="ECO:0007669"/>
    <property type="project" value="UniProtKB-EC"/>
</dbReference>
<dbReference type="GO" id="GO:0002098">
    <property type="term" value="P:tRNA wobble uridine modification"/>
    <property type="evidence" value="ECO:0007669"/>
    <property type="project" value="UniProtKB-UniRule"/>
</dbReference>
<dbReference type="CDD" id="cd01520">
    <property type="entry name" value="RHOD_YbbB"/>
    <property type="match status" value="1"/>
</dbReference>
<dbReference type="FunFam" id="3.40.250.10:FF:000009">
    <property type="entry name" value="tRNA 2-selenouridine/geranyl-2-thiouridine synthase"/>
    <property type="match status" value="1"/>
</dbReference>
<dbReference type="Gene3D" id="3.40.250.10">
    <property type="entry name" value="Rhodanese-like domain"/>
    <property type="match status" value="1"/>
</dbReference>
<dbReference type="HAMAP" id="MF_01622">
    <property type="entry name" value="tRNA_sel_U_synth"/>
    <property type="match status" value="1"/>
</dbReference>
<dbReference type="InterPro" id="IPR001763">
    <property type="entry name" value="Rhodanese-like_dom"/>
</dbReference>
<dbReference type="InterPro" id="IPR036873">
    <property type="entry name" value="Rhodanese-like_dom_sf"/>
</dbReference>
<dbReference type="InterPro" id="IPR017582">
    <property type="entry name" value="SelU"/>
</dbReference>
<dbReference type="NCBIfam" id="NF008749">
    <property type="entry name" value="PRK11784.1-1"/>
    <property type="match status" value="1"/>
</dbReference>
<dbReference type="NCBIfam" id="NF008751">
    <property type="entry name" value="PRK11784.1-3"/>
    <property type="match status" value="1"/>
</dbReference>
<dbReference type="NCBIfam" id="TIGR03167">
    <property type="entry name" value="tRNA_sel_U_synt"/>
    <property type="match status" value="1"/>
</dbReference>
<dbReference type="PANTHER" id="PTHR30401">
    <property type="entry name" value="TRNA 2-SELENOURIDINE SYNTHASE"/>
    <property type="match status" value="1"/>
</dbReference>
<dbReference type="PANTHER" id="PTHR30401:SF0">
    <property type="entry name" value="TRNA 2-SELENOURIDINE SYNTHASE"/>
    <property type="match status" value="1"/>
</dbReference>
<dbReference type="SMART" id="SM00450">
    <property type="entry name" value="RHOD"/>
    <property type="match status" value="1"/>
</dbReference>
<dbReference type="SUPFAM" id="SSF52821">
    <property type="entry name" value="Rhodanese/Cell cycle control phosphatase"/>
    <property type="match status" value="1"/>
</dbReference>
<dbReference type="PROSITE" id="PS50206">
    <property type="entry name" value="RHODANESE_3"/>
    <property type="match status" value="1"/>
</dbReference>
<comment type="function">
    <text evidence="1">Involved in the post-transcriptional modification of the uridine at the wobble position (U34) of tRNA(Lys), tRNA(Glu) and tRNA(Gln). Catalyzes the conversion of 2-thiouridine (S2U-RNA) to 2-selenouridine (Se2U-RNA). Acts in a two-step process involving geranylation of 2-thiouridine (S2U) to S-geranyl-2-thiouridine (geS2U) and subsequent selenation of the latter derivative to 2-selenouridine (Se2U) in the tRNA chain.</text>
</comment>
<comment type="catalytic activity">
    <reaction evidence="1">
        <text>5-methylaminomethyl-2-thiouridine(34) in tRNA + selenophosphate + (2E)-geranyl diphosphate + H2O + H(+) = 5-methylaminomethyl-2-selenouridine(34) in tRNA + (2E)-thiogeraniol + phosphate + diphosphate</text>
        <dbReference type="Rhea" id="RHEA:42716"/>
        <dbReference type="Rhea" id="RHEA-COMP:10195"/>
        <dbReference type="Rhea" id="RHEA-COMP:10196"/>
        <dbReference type="ChEBI" id="CHEBI:15377"/>
        <dbReference type="ChEBI" id="CHEBI:15378"/>
        <dbReference type="ChEBI" id="CHEBI:16144"/>
        <dbReference type="ChEBI" id="CHEBI:33019"/>
        <dbReference type="ChEBI" id="CHEBI:43474"/>
        <dbReference type="ChEBI" id="CHEBI:58057"/>
        <dbReference type="ChEBI" id="CHEBI:74455"/>
        <dbReference type="ChEBI" id="CHEBI:82743"/>
        <dbReference type="ChEBI" id="CHEBI:143703"/>
        <dbReference type="EC" id="2.9.1.3"/>
    </reaction>
    <physiologicalReaction direction="left-to-right" evidence="1">
        <dbReference type="Rhea" id="RHEA:42717"/>
    </physiologicalReaction>
</comment>
<comment type="catalytic activity">
    <reaction evidence="1">
        <text>5-methylaminomethyl-2-thiouridine(34) in tRNA + (2E)-geranyl diphosphate = 5-methylaminomethyl-S-(2E)-geranyl-thiouridine(34) in tRNA + diphosphate</text>
        <dbReference type="Rhea" id="RHEA:14085"/>
        <dbReference type="Rhea" id="RHEA-COMP:10195"/>
        <dbReference type="Rhea" id="RHEA-COMP:14654"/>
        <dbReference type="ChEBI" id="CHEBI:33019"/>
        <dbReference type="ChEBI" id="CHEBI:58057"/>
        <dbReference type="ChEBI" id="CHEBI:74455"/>
        <dbReference type="ChEBI" id="CHEBI:140632"/>
    </reaction>
    <physiologicalReaction direction="left-to-right" evidence="1">
        <dbReference type="Rhea" id="RHEA:14086"/>
    </physiologicalReaction>
</comment>
<comment type="catalytic activity">
    <reaction evidence="1">
        <text>5-methylaminomethyl-S-(2E)-geranyl-thiouridine(34) in tRNA + selenophosphate + H(+) = 5-methylaminomethyl-2-(Se-phospho)selenouridine(34) in tRNA + (2E)-thiogeraniol</text>
        <dbReference type="Rhea" id="RHEA:60172"/>
        <dbReference type="Rhea" id="RHEA-COMP:14654"/>
        <dbReference type="Rhea" id="RHEA-COMP:15523"/>
        <dbReference type="ChEBI" id="CHEBI:15378"/>
        <dbReference type="ChEBI" id="CHEBI:16144"/>
        <dbReference type="ChEBI" id="CHEBI:140632"/>
        <dbReference type="ChEBI" id="CHEBI:143702"/>
        <dbReference type="ChEBI" id="CHEBI:143703"/>
    </reaction>
    <physiologicalReaction direction="left-to-right" evidence="1">
        <dbReference type="Rhea" id="RHEA:60173"/>
    </physiologicalReaction>
</comment>
<comment type="catalytic activity">
    <reaction evidence="1">
        <text>5-methylaminomethyl-2-(Se-phospho)selenouridine(34) in tRNA + H2O = 5-methylaminomethyl-2-selenouridine(34) in tRNA + phosphate</text>
        <dbReference type="Rhea" id="RHEA:60176"/>
        <dbReference type="Rhea" id="RHEA-COMP:10196"/>
        <dbReference type="Rhea" id="RHEA-COMP:15523"/>
        <dbReference type="ChEBI" id="CHEBI:15377"/>
        <dbReference type="ChEBI" id="CHEBI:43474"/>
        <dbReference type="ChEBI" id="CHEBI:82743"/>
        <dbReference type="ChEBI" id="CHEBI:143702"/>
    </reaction>
    <physiologicalReaction direction="left-to-right" evidence="1">
        <dbReference type="Rhea" id="RHEA:60177"/>
    </physiologicalReaction>
</comment>
<comment type="subunit">
    <text evidence="1">Monomer.</text>
</comment>
<comment type="similarity">
    <text evidence="1">Belongs to the SelU family.</text>
</comment>
<sequence length="364" mass="41129">MQERHTEQDYRALLIADTPIIDVRAPIEFEQGAMPAAINLPLMNNDERAAVGTCYKQQGSDAALALGHKLVAGEIRQQRMDAWRAACLQNPQGILCCARGGQRSHIVQSWLYAAGIDYPLVEGGYKALRQTAIQATIELAQKPIVLIGGCTGSGKTLLVQQQPNGVDLEGLARHRGSAFGRTLQPQLSQASFENLLAAEMLKTDARQNLRLWVLEDESRMIGSNHLPECLRERMTQAAIAVVEDPFEIRLERLNEEYFLRMHHDFTHAYGDEQGWQEYCEYLHHGLSAIKRRLGLQRYNELAAQLDTALTTQLTTGSTDGHLAWLVPLLKEYYDPMYRYQLEKKAEKVVFRGEWAEVAEWVKAR</sequence>
<gene>
    <name evidence="1" type="primary">selU</name>
    <name type="ordered locus">ECSE_0529</name>
</gene>
<organism>
    <name type="scientific">Escherichia coli (strain SE11)</name>
    <dbReference type="NCBI Taxonomy" id="409438"/>
    <lineage>
        <taxon>Bacteria</taxon>
        <taxon>Pseudomonadati</taxon>
        <taxon>Pseudomonadota</taxon>
        <taxon>Gammaproteobacteria</taxon>
        <taxon>Enterobacterales</taxon>
        <taxon>Enterobacteriaceae</taxon>
        <taxon>Escherichia</taxon>
    </lineage>
</organism>
<keyword id="KW-0711">Selenium</keyword>
<keyword id="KW-0808">Transferase</keyword>
<accession>B6I0F4</accession>
<name>SELU_ECOSE</name>
<protein>
    <recommendedName>
        <fullName evidence="1">tRNA 2-selenouridine synthase</fullName>
        <ecNumber evidence="1">2.9.1.3</ecNumber>
    </recommendedName>
</protein>
<proteinExistence type="inferred from homology"/>
<reference key="1">
    <citation type="journal article" date="2008" name="DNA Res.">
        <title>Complete genome sequence and comparative analysis of the wild-type commensal Escherichia coli strain SE11 isolated from a healthy adult.</title>
        <authorList>
            <person name="Oshima K."/>
            <person name="Toh H."/>
            <person name="Ogura Y."/>
            <person name="Sasamoto H."/>
            <person name="Morita H."/>
            <person name="Park S.-H."/>
            <person name="Ooka T."/>
            <person name="Iyoda S."/>
            <person name="Taylor T.D."/>
            <person name="Hayashi T."/>
            <person name="Itoh K."/>
            <person name="Hattori M."/>
        </authorList>
    </citation>
    <scope>NUCLEOTIDE SEQUENCE [LARGE SCALE GENOMIC DNA]</scope>
    <source>
        <strain>SE11</strain>
    </source>
</reference>
<feature type="chain" id="PRO_1000186073" description="tRNA 2-selenouridine synthase">
    <location>
        <begin position="1"/>
        <end position="364"/>
    </location>
</feature>
<feature type="domain" description="Rhodanese" evidence="1">
    <location>
        <begin position="14"/>
        <end position="137"/>
    </location>
</feature>
<feature type="active site" description="S-selanylcysteine intermediate" evidence="1">
    <location>
        <position position="97"/>
    </location>
</feature>